<proteinExistence type="evidence at protein level"/>
<protein>
    <recommendedName>
        <fullName evidence="1">A-type ATP synthase subunit D</fullName>
    </recommendedName>
    <alternativeName>
        <fullName evidence="3">A1A0 ATPase subunit D</fullName>
    </alternativeName>
</protein>
<reference key="1">
    <citation type="journal article" date="1996" name="J. Biol. Chem.">
        <title>Subunit structure and organization of the genes of the A1A0 ATPase from the Archaeon Methanosarcina mazei Go1.</title>
        <authorList>
            <person name="Wilms R."/>
            <person name="Freiberg C."/>
            <person name="Wegerle E."/>
            <person name="Meier I."/>
            <person name="Mayer F."/>
            <person name="Mueller V."/>
        </authorList>
    </citation>
    <scope>NUCLEOTIDE SEQUENCE [GENOMIC DNA]</scope>
    <scope>FUNCTION</scope>
    <scope>BIOPHYSICOCHEMICAL PROPERTIES</scope>
    <scope>SUBUNIT</scope>
    <scope>SUBCELLULAR LOCATION</scope>
    <source>
        <strain>ATCC BAA-159 / DSM 3647 / Goe1 / Go1 / JCM 11833 / OCM 88</strain>
    </source>
</reference>
<reference key="2">
    <citation type="journal article" date="2002" name="J. Mol. Microbiol. Biotechnol.">
        <title>The genome of Methanosarcina mazei: evidence for lateral gene transfer between Bacteria and Archaea.</title>
        <authorList>
            <person name="Deppenmeier U."/>
            <person name="Johann A."/>
            <person name="Hartsch T."/>
            <person name="Merkl R."/>
            <person name="Schmitz R.A."/>
            <person name="Martinez-Arias R."/>
            <person name="Henne A."/>
            <person name="Wiezer A."/>
            <person name="Baeumer S."/>
            <person name="Jacobi C."/>
            <person name="Brueggemann H."/>
            <person name="Lienard T."/>
            <person name="Christmann A."/>
            <person name="Boemecke M."/>
            <person name="Steckel S."/>
            <person name="Bhattacharyya A."/>
            <person name="Lykidis A."/>
            <person name="Overbeek R."/>
            <person name="Klenk H.-P."/>
            <person name="Gunsalus R.P."/>
            <person name="Fritz H.-J."/>
            <person name="Gottschalk G."/>
        </authorList>
    </citation>
    <scope>NUCLEOTIDE SEQUENCE [LARGE SCALE GENOMIC DNA]</scope>
    <source>
        <strain>ATCC BAA-159 / DSM 3647 / Goe1 / Go1 / JCM 11833 / OCM 88</strain>
    </source>
</reference>
<name>AATD_METMA</name>
<evidence type="ECO:0000255" key="1">
    <source>
        <dbReference type="HAMAP-Rule" id="MF_00271"/>
    </source>
</evidence>
<evidence type="ECO:0000269" key="2">
    <source>
    </source>
</evidence>
<evidence type="ECO:0000303" key="3">
    <source>
    </source>
</evidence>
<evidence type="ECO:0000305" key="4"/>
<evidence type="ECO:0000305" key="5">
    <source>
    </source>
</evidence>
<keyword id="KW-0066">ATP synthesis</keyword>
<keyword id="KW-1003">Cell membrane</keyword>
<keyword id="KW-0375">Hydrogen ion transport</keyword>
<keyword id="KW-0406">Ion transport</keyword>
<keyword id="KW-0472">Membrane</keyword>
<keyword id="KW-0813">Transport</keyword>
<comment type="function">
    <text evidence="1 5">Component of the A-type ATP synthase that produces ATP from ADP in the presence of a proton gradient across the membrane.</text>
</comment>
<comment type="biophysicochemical properties">
    <phDependence>
        <text evidence="2">Optimum pH is 5.2 for ATP hydrolysis.</text>
    </phDependence>
</comment>
<comment type="subunit">
    <text evidence="2">Has multiple subunits, A(3), B(3), C, D, E, F, G, I and K(x); there may be a few other subunits as well.</text>
</comment>
<comment type="subcellular location">
    <subcellularLocation>
        <location evidence="1 2">Cell membrane</location>
        <topology evidence="1 5">Peripheral membrane protein</topology>
    </subcellularLocation>
</comment>
<comment type="miscellaneous">
    <text evidence="5">This organism has both a Na(+)-translocating F1F0 ATP synthase and this H(+)-translocating A1A0 ATP synthase.</text>
</comment>
<comment type="similarity">
    <text evidence="1">Belongs to the V-ATPase D subunit family.</text>
</comment>
<comment type="sequence caution" evidence="4">
    <conflict type="erroneous initiation">
        <sequence resource="EMBL-CDS" id="AAM30474"/>
    </conflict>
    <text>Extended N-terminus.</text>
</comment>
<feature type="chain" id="PRO_0000144252" description="A-type ATP synthase subunit D">
    <location>
        <begin position="1"/>
        <end position="209"/>
    </location>
</feature>
<dbReference type="EMBL" id="U47274">
    <property type="protein sequence ID" value="AAC06377.1"/>
    <property type="molecule type" value="Genomic_DNA"/>
</dbReference>
<dbReference type="EMBL" id="AE008384">
    <property type="protein sequence ID" value="AAM30474.1"/>
    <property type="status" value="ALT_INIT"/>
    <property type="molecule type" value="Genomic_DNA"/>
</dbReference>
<dbReference type="PIR" id="T45109">
    <property type="entry name" value="T45109"/>
</dbReference>
<dbReference type="SMR" id="Q60188"/>
<dbReference type="TCDB" id="3.A.2.3.1">
    <property type="family name" value="the h+- or na+-translocating f-type, v-type and a-type atpase (f-atpase) superfamily"/>
</dbReference>
<dbReference type="KEGG" id="mma:MM_0778"/>
<dbReference type="PATRIC" id="fig|192952.21.peg.926"/>
<dbReference type="eggNOG" id="arCOG04101">
    <property type="taxonomic scope" value="Archaea"/>
</dbReference>
<dbReference type="HOGENOM" id="CLU_069688_2_1_2"/>
<dbReference type="Proteomes" id="UP000000595">
    <property type="component" value="Chromosome"/>
</dbReference>
<dbReference type="GO" id="GO:0005886">
    <property type="term" value="C:plasma membrane"/>
    <property type="evidence" value="ECO:0007669"/>
    <property type="project" value="UniProtKB-SubCell"/>
</dbReference>
<dbReference type="GO" id="GO:0005524">
    <property type="term" value="F:ATP binding"/>
    <property type="evidence" value="ECO:0007669"/>
    <property type="project" value="UniProtKB-UniRule"/>
</dbReference>
<dbReference type="GO" id="GO:0046933">
    <property type="term" value="F:proton-transporting ATP synthase activity, rotational mechanism"/>
    <property type="evidence" value="ECO:0007669"/>
    <property type="project" value="UniProtKB-UniRule"/>
</dbReference>
<dbReference type="GO" id="GO:0046961">
    <property type="term" value="F:proton-transporting ATPase activity, rotational mechanism"/>
    <property type="evidence" value="ECO:0007669"/>
    <property type="project" value="InterPro"/>
</dbReference>
<dbReference type="GO" id="GO:0042777">
    <property type="term" value="P:proton motive force-driven plasma membrane ATP synthesis"/>
    <property type="evidence" value="ECO:0007669"/>
    <property type="project" value="UniProtKB-UniRule"/>
</dbReference>
<dbReference type="FunFam" id="1.10.287.3240:FF:000007">
    <property type="entry name" value="V-type ATP synthase subunit D"/>
    <property type="match status" value="1"/>
</dbReference>
<dbReference type="Gene3D" id="1.10.287.3240">
    <property type="match status" value="1"/>
</dbReference>
<dbReference type="HAMAP" id="MF_00271">
    <property type="entry name" value="ATP_synth_D_arch"/>
    <property type="match status" value="1"/>
</dbReference>
<dbReference type="InterPro" id="IPR002699">
    <property type="entry name" value="V_ATPase_D"/>
</dbReference>
<dbReference type="NCBIfam" id="NF001542">
    <property type="entry name" value="PRK00373.1-1"/>
    <property type="match status" value="1"/>
</dbReference>
<dbReference type="NCBIfam" id="NF001545">
    <property type="entry name" value="PRK00373.1-4"/>
    <property type="match status" value="1"/>
</dbReference>
<dbReference type="NCBIfam" id="TIGR00309">
    <property type="entry name" value="V_ATPase_subD"/>
    <property type="match status" value="1"/>
</dbReference>
<dbReference type="PANTHER" id="PTHR11671">
    <property type="entry name" value="V-TYPE ATP SYNTHASE SUBUNIT D"/>
    <property type="match status" value="1"/>
</dbReference>
<dbReference type="Pfam" id="PF01813">
    <property type="entry name" value="ATP-synt_D"/>
    <property type="match status" value="1"/>
</dbReference>
<gene>
    <name evidence="1" type="primary">atpD</name>
    <name evidence="3" type="synonym">ahaD</name>
    <name type="ordered locus">MM_0778</name>
</gene>
<sequence length="209" mass="23901">MAQQDVKPTRSELINLKKKIKLSESGHKLLKMKRDGLILEFFKILNEARNVRTELDAAFAKSTEKINLASAVNGMVAVRSTAFTAKESPEIQLSGHNIMGVVVPKISSTGVRKSLYERGYGIIGTNSYIDETADAYEDLVEKIITAAELETTMKRLLDEIEKTKRRVNALEFKVIPELIDTMKYIRFMLEEMERENTFRLKRVKARMRD</sequence>
<accession>Q60188</accession>
<organism>
    <name type="scientific">Methanosarcina mazei (strain ATCC BAA-159 / DSM 3647 / Goe1 / Go1 / JCM 11833 / OCM 88)</name>
    <name type="common">Methanosarcina frisia</name>
    <dbReference type="NCBI Taxonomy" id="192952"/>
    <lineage>
        <taxon>Archaea</taxon>
        <taxon>Methanobacteriati</taxon>
        <taxon>Methanobacteriota</taxon>
        <taxon>Stenosarchaea group</taxon>
        <taxon>Methanomicrobia</taxon>
        <taxon>Methanosarcinales</taxon>
        <taxon>Methanosarcinaceae</taxon>
        <taxon>Methanosarcina</taxon>
    </lineage>
</organism>